<proteinExistence type="inferred from homology"/>
<evidence type="ECO:0000255" key="1">
    <source>
        <dbReference type="HAMAP-Rule" id="MF_00360"/>
    </source>
</evidence>
<evidence type="ECO:0000305" key="2"/>
<dbReference type="EMBL" id="AM167904">
    <property type="protein sequence ID" value="CAJ49784.1"/>
    <property type="molecule type" value="Genomic_DNA"/>
</dbReference>
<dbReference type="RefSeq" id="WP_012417836.1">
    <property type="nucleotide sequence ID" value="NC_010645.1"/>
</dbReference>
<dbReference type="SMR" id="Q2KZ18"/>
<dbReference type="STRING" id="360910.BAV2175"/>
<dbReference type="GeneID" id="92934764"/>
<dbReference type="KEGG" id="bav:BAV2175"/>
<dbReference type="eggNOG" id="COG0360">
    <property type="taxonomic scope" value="Bacteria"/>
</dbReference>
<dbReference type="HOGENOM" id="CLU_113441_6_1_4"/>
<dbReference type="OrthoDB" id="9812702at2"/>
<dbReference type="Proteomes" id="UP000001977">
    <property type="component" value="Chromosome"/>
</dbReference>
<dbReference type="GO" id="GO:0022627">
    <property type="term" value="C:cytosolic small ribosomal subunit"/>
    <property type="evidence" value="ECO:0007669"/>
    <property type="project" value="TreeGrafter"/>
</dbReference>
<dbReference type="GO" id="GO:0070181">
    <property type="term" value="F:small ribosomal subunit rRNA binding"/>
    <property type="evidence" value="ECO:0007669"/>
    <property type="project" value="TreeGrafter"/>
</dbReference>
<dbReference type="GO" id="GO:0003735">
    <property type="term" value="F:structural constituent of ribosome"/>
    <property type="evidence" value="ECO:0007669"/>
    <property type="project" value="InterPro"/>
</dbReference>
<dbReference type="GO" id="GO:0006412">
    <property type="term" value="P:translation"/>
    <property type="evidence" value="ECO:0007669"/>
    <property type="project" value="UniProtKB-UniRule"/>
</dbReference>
<dbReference type="CDD" id="cd00473">
    <property type="entry name" value="bS6"/>
    <property type="match status" value="1"/>
</dbReference>
<dbReference type="Gene3D" id="3.30.70.60">
    <property type="match status" value="1"/>
</dbReference>
<dbReference type="HAMAP" id="MF_00360">
    <property type="entry name" value="Ribosomal_bS6"/>
    <property type="match status" value="1"/>
</dbReference>
<dbReference type="InterPro" id="IPR000529">
    <property type="entry name" value="Ribosomal_bS6"/>
</dbReference>
<dbReference type="InterPro" id="IPR035980">
    <property type="entry name" value="Ribosomal_bS6_sf"/>
</dbReference>
<dbReference type="InterPro" id="IPR020814">
    <property type="entry name" value="Ribosomal_S6_plastid/chlpt"/>
</dbReference>
<dbReference type="InterPro" id="IPR014717">
    <property type="entry name" value="Transl_elong_EF1B/ribsomal_bS6"/>
</dbReference>
<dbReference type="NCBIfam" id="TIGR00166">
    <property type="entry name" value="S6"/>
    <property type="match status" value="1"/>
</dbReference>
<dbReference type="PANTHER" id="PTHR21011">
    <property type="entry name" value="MITOCHONDRIAL 28S RIBOSOMAL PROTEIN S6"/>
    <property type="match status" value="1"/>
</dbReference>
<dbReference type="PANTHER" id="PTHR21011:SF1">
    <property type="entry name" value="SMALL RIBOSOMAL SUBUNIT PROTEIN BS6M"/>
    <property type="match status" value="1"/>
</dbReference>
<dbReference type="Pfam" id="PF01250">
    <property type="entry name" value="Ribosomal_S6"/>
    <property type="match status" value="1"/>
</dbReference>
<dbReference type="SUPFAM" id="SSF54995">
    <property type="entry name" value="Ribosomal protein S6"/>
    <property type="match status" value="1"/>
</dbReference>
<comment type="function">
    <text evidence="1">Binds together with bS18 to 16S ribosomal RNA.</text>
</comment>
<comment type="similarity">
    <text evidence="1">Belongs to the bacterial ribosomal protein bS6 family.</text>
</comment>
<gene>
    <name evidence="1" type="primary">rpsF</name>
    <name type="ordered locus">BAV2175</name>
</gene>
<accession>Q2KZ18</accession>
<reference key="1">
    <citation type="journal article" date="2006" name="J. Bacteriol.">
        <title>Comparison of the genome sequence of the poultry pathogen Bordetella avium with those of B. bronchiseptica, B. pertussis, and B. parapertussis reveals extensive diversity in surface structures associated with host interaction.</title>
        <authorList>
            <person name="Sebaihia M."/>
            <person name="Preston A."/>
            <person name="Maskell D.J."/>
            <person name="Kuzmiak H."/>
            <person name="Connell T.D."/>
            <person name="King N.D."/>
            <person name="Orndorff P.E."/>
            <person name="Miyamoto D.M."/>
            <person name="Thomson N.R."/>
            <person name="Harris D."/>
            <person name="Goble A."/>
            <person name="Lord A."/>
            <person name="Murphy L."/>
            <person name="Quail M.A."/>
            <person name="Rutter S."/>
            <person name="Squares R."/>
            <person name="Squares S."/>
            <person name="Woodward J."/>
            <person name="Parkhill J."/>
            <person name="Temple L.M."/>
        </authorList>
    </citation>
    <scope>NUCLEOTIDE SEQUENCE [LARGE SCALE GENOMIC DNA]</scope>
    <source>
        <strain>197N</strain>
    </source>
</reference>
<protein>
    <recommendedName>
        <fullName evidence="1">Small ribosomal subunit protein bS6</fullName>
    </recommendedName>
    <alternativeName>
        <fullName evidence="2">30S ribosomal protein S6</fullName>
    </alternativeName>
</protein>
<name>RS6_BORA1</name>
<organism>
    <name type="scientific">Bordetella avium (strain 197N)</name>
    <dbReference type="NCBI Taxonomy" id="360910"/>
    <lineage>
        <taxon>Bacteria</taxon>
        <taxon>Pseudomonadati</taxon>
        <taxon>Pseudomonadota</taxon>
        <taxon>Betaproteobacteria</taxon>
        <taxon>Burkholderiales</taxon>
        <taxon>Alcaligenaceae</taxon>
        <taxon>Bordetella</taxon>
    </lineage>
</organism>
<sequence>MRHYEVVFIVHPDQSEQVPAMVERYQSLVTGQNGAVHRLEDWGRRQLAYPIQKLVKAHYVCMNIECNQATLDELEHSFRYNDAVLRHLVIKTKKAPVGASIMMKSVEREEARKASAEAAAVQAE</sequence>
<keyword id="KW-1185">Reference proteome</keyword>
<keyword id="KW-0687">Ribonucleoprotein</keyword>
<keyword id="KW-0689">Ribosomal protein</keyword>
<keyword id="KW-0694">RNA-binding</keyword>
<keyword id="KW-0699">rRNA-binding</keyword>
<feature type="chain" id="PRO_1000005221" description="Small ribosomal subunit protein bS6">
    <location>
        <begin position="1"/>
        <end position="124"/>
    </location>
</feature>